<evidence type="ECO:0000255" key="1">
    <source>
        <dbReference type="PROSITE-ProRule" id="PRU00154"/>
    </source>
</evidence>
<evidence type="ECO:0000255" key="2">
    <source>
        <dbReference type="PROSITE-ProRule" id="PRU00159"/>
    </source>
</evidence>
<evidence type="ECO:0000255" key="3">
    <source>
        <dbReference type="PROSITE-ProRule" id="PRU10027"/>
    </source>
</evidence>
<evidence type="ECO:0000269" key="4">
    <source>
    </source>
</evidence>
<evidence type="ECO:0000269" key="5">
    <source>
    </source>
</evidence>
<evidence type="ECO:0000269" key="6">
    <source>
    </source>
</evidence>
<evidence type="ECO:0000305" key="7"/>
<name>POLO_DROME</name>
<comment type="function">
    <text evidence="4 6">May play a role in regulating both nuclear and cytoplasmic aspects of the mitotic cycle (PubMed:1660828). Regulates localization of the augmin complex during mitosis by ensuring its location on mitotic spindles (PubMed:24829288). Also regulates augmin complex localization during male meiosis by promoting its placement at kinetochores while preventing its association with spindle microtubules (PubMed:24829288).</text>
</comment>
<comment type="catalytic activity">
    <reaction>
        <text>L-seryl-[protein] + ATP = O-phospho-L-seryl-[protein] + ADP + H(+)</text>
        <dbReference type="Rhea" id="RHEA:17989"/>
        <dbReference type="Rhea" id="RHEA-COMP:9863"/>
        <dbReference type="Rhea" id="RHEA-COMP:11604"/>
        <dbReference type="ChEBI" id="CHEBI:15378"/>
        <dbReference type="ChEBI" id="CHEBI:29999"/>
        <dbReference type="ChEBI" id="CHEBI:30616"/>
        <dbReference type="ChEBI" id="CHEBI:83421"/>
        <dbReference type="ChEBI" id="CHEBI:456216"/>
        <dbReference type="EC" id="2.7.11.21"/>
    </reaction>
</comment>
<comment type="catalytic activity">
    <reaction>
        <text>L-threonyl-[protein] + ATP = O-phospho-L-threonyl-[protein] + ADP + H(+)</text>
        <dbReference type="Rhea" id="RHEA:46608"/>
        <dbReference type="Rhea" id="RHEA-COMP:11060"/>
        <dbReference type="Rhea" id="RHEA-COMP:11605"/>
        <dbReference type="ChEBI" id="CHEBI:15378"/>
        <dbReference type="ChEBI" id="CHEBI:30013"/>
        <dbReference type="ChEBI" id="CHEBI:30616"/>
        <dbReference type="ChEBI" id="CHEBI:61977"/>
        <dbReference type="ChEBI" id="CHEBI:456216"/>
        <dbReference type="EC" id="2.7.11.21"/>
    </reaction>
</comment>
<comment type="interaction">
    <interactant intactId="EBI-163922">
        <id>P52304</id>
    </interactant>
    <interactant intactId="EBI-166563">
        <id>Q23973</id>
        <label>mtrm</label>
    </interactant>
    <organismsDiffer>false</organismsDiffer>
    <experiments>4</experiments>
</comment>
<comment type="subcellular location">
    <subcellularLocation>
        <location evidence="4">Cytoplasm</location>
    </subcellularLocation>
</comment>
<comment type="tissue specificity">
    <text evidence="4">Larval disks, brain and testis.</text>
</comment>
<comment type="similarity">
    <text evidence="2">Belongs to the protein kinase superfamily. Ser/Thr protein kinase family. CDC5/Polo subfamily.</text>
</comment>
<keyword id="KW-0067">ATP-binding</keyword>
<keyword id="KW-0963">Cytoplasm</keyword>
<keyword id="KW-0418">Kinase</keyword>
<keyword id="KW-0547">Nucleotide-binding</keyword>
<keyword id="KW-0597">Phosphoprotein</keyword>
<keyword id="KW-1185">Reference proteome</keyword>
<keyword id="KW-0677">Repeat</keyword>
<keyword id="KW-0723">Serine/threonine-protein kinase</keyword>
<keyword id="KW-0808">Transferase</keyword>
<sequence>MAAKPEDKSTDIPDRLVDINQRKTYKRMRFFGKGGFAKCYEIIDVETDDVFAGKIVSKKLMIKHNQKEKTAQEITIHRSLNHPNIVKFHNYFEDSQNIYIVLELCKKRSMMELHKRRKSITEFECRYYIYQIIQGVKYLHDNRIIHRDLKLGNLFLNDLLHVKIGDFGLATRIEYEGERKKTLCGTPNYIAPEILTKKGHSFEVDIWSIGCVMYTLLVGQPPFETKTLKDTYSKIKKCEYRVPSYLRKPAADMVIAMLQPNPESRPAIGQLLNFEFLKGSKVPMFLPSSCLTMAPRIGSNDTIEDSMHRKPLMEMNGIRPDDTRLESTFLKANLHDAITASAQVCRHSEDYRSDIESLYQQLTNLINGKPRILQGNLGDENTDPAAQPLFWISKWVDYSDKYGFGYQLCDEGIGVMFNDTTKLILLPNQINVHFIDKDGKETYMTTTDYCKSLDKKMKLLSYFKRYMIEHLVKAGANNVNIESDQISRMPHLHSWFRTTCAVVMHLTNGSVQLNFSDHMKLILCPRMSAITYMDQEKNFRTYRFSTIVENGVSKDLYQKIRYAQEKLRKMLEKMFT</sequence>
<dbReference type="EC" id="2.7.11.21"/>
<dbReference type="EMBL" id="X63361">
    <property type="protein sequence ID" value="CAA44963.1"/>
    <property type="molecule type" value="mRNA"/>
</dbReference>
<dbReference type="EMBL" id="AE014296">
    <property type="protein sequence ID" value="AAF49036.1"/>
    <property type="molecule type" value="Genomic_DNA"/>
</dbReference>
<dbReference type="EMBL" id="AE014296">
    <property type="protein sequence ID" value="AAX52738.1"/>
    <property type="molecule type" value="Genomic_DNA"/>
</dbReference>
<dbReference type="EMBL" id="AY095028">
    <property type="protein sequence ID" value="AAM11356.1"/>
    <property type="molecule type" value="mRNA"/>
</dbReference>
<dbReference type="PIR" id="S22127">
    <property type="entry name" value="S22127"/>
</dbReference>
<dbReference type="RefSeq" id="NP_001014592.1">
    <property type="nucleotide sequence ID" value="NM_001014592.2"/>
</dbReference>
<dbReference type="RefSeq" id="NP_524179.2">
    <property type="nucleotide sequence ID" value="NM_079455.4"/>
</dbReference>
<dbReference type="SMR" id="P52304"/>
<dbReference type="BioGRID" id="65494">
    <property type="interactions" value="88"/>
</dbReference>
<dbReference type="DIP" id="DIP-18462N"/>
<dbReference type="FunCoup" id="P52304">
    <property type="interactions" value="538"/>
</dbReference>
<dbReference type="IntAct" id="P52304">
    <property type="interactions" value="48"/>
</dbReference>
<dbReference type="MINT" id="P52304"/>
<dbReference type="STRING" id="7227.FBpp0074608"/>
<dbReference type="iPTMnet" id="P52304"/>
<dbReference type="PaxDb" id="7227-FBpp0074608"/>
<dbReference type="EnsemblMetazoa" id="FBtr0074839">
    <property type="protein sequence ID" value="FBpp0074608"/>
    <property type="gene ID" value="FBgn0003124"/>
</dbReference>
<dbReference type="EnsemblMetazoa" id="FBtr0100318">
    <property type="protein sequence ID" value="FBpp0099722"/>
    <property type="gene ID" value="FBgn0003124"/>
</dbReference>
<dbReference type="GeneID" id="40232"/>
<dbReference type="KEGG" id="dme:Dmel_CG12306"/>
<dbReference type="AGR" id="FB:FBgn0003124"/>
<dbReference type="CTD" id="40232"/>
<dbReference type="FlyBase" id="FBgn0003124">
    <property type="gene designation" value="polo"/>
</dbReference>
<dbReference type="VEuPathDB" id="VectorBase:FBgn0003124"/>
<dbReference type="eggNOG" id="KOG0575">
    <property type="taxonomic scope" value="Eukaryota"/>
</dbReference>
<dbReference type="GeneTree" id="ENSGT00940000157752"/>
<dbReference type="HOGENOM" id="CLU_000288_46_1_1"/>
<dbReference type="InParanoid" id="P52304"/>
<dbReference type="OMA" id="IQIHKSM"/>
<dbReference type="OrthoDB" id="408964at2759"/>
<dbReference type="PhylomeDB" id="P52304"/>
<dbReference type="BRENDA" id="2.7.11.21">
    <property type="organism ID" value="1994"/>
</dbReference>
<dbReference type="Reactome" id="R-DME-156711">
    <property type="pathway name" value="Polo-like kinase mediated events"/>
</dbReference>
<dbReference type="Reactome" id="R-DME-162658">
    <property type="pathway name" value="Golgi Cisternae Pericentriolar Stack Reorganization"/>
</dbReference>
<dbReference type="Reactome" id="R-DME-174178">
    <property type="pathway name" value="APC/C:Cdh1 mediated degradation of Cdc20 and other APC/C:Cdh1 targeted proteins in late mitosis/early G1"/>
</dbReference>
<dbReference type="Reactome" id="R-DME-176412">
    <property type="pathway name" value="Phosphorylation of the APC/C"/>
</dbReference>
<dbReference type="Reactome" id="R-DME-176417">
    <property type="pathway name" value="Phosphorylation of Emi1"/>
</dbReference>
<dbReference type="Reactome" id="R-DME-2500257">
    <property type="pathway name" value="Resolution of Sister Chromatid Cohesion"/>
</dbReference>
<dbReference type="Reactome" id="R-DME-2565942">
    <property type="pathway name" value="Regulation of PLK1 Activity at G2/M Transition"/>
</dbReference>
<dbReference type="Reactome" id="R-DME-68881">
    <property type="pathway name" value="Mitotic Metaphase/Anaphase Transition"/>
</dbReference>
<dbReference type="Reactome" id="R-DME-68884">
    <property type="pathway name" value="Mitotic Telophase/Cytokinesis"/>
</dbReference>
<dbReference type="Reactome" id="R-DME-69273">
    <property type="pathway name" value="Cyclin A/B1/B2 associated events during G2/M transition"/>
</dbReference>
<dbReference type="Reactome" id="R-DME-9648025">
    <property type="pathway name" value="EML4 and NUDC in mitotic spindle formation"/>
</dbReference>
<dbReference type="SignaLink" id="P52304"/>
<dbReference type="BioGRID-ORCS" id="40232">
    <property type="hits" value="1 hit in 3 CRISPR screens"/>
</dbReference>
<dbReference type="CD-CODE" id="2838EF58">
    <property type="entry name" value="Centrosome"/>
</dbReference>
<dbReference type="ChiTaRS" id="polo">
    <property type="organism name" value="fly"/>
</dbReference>
<dbReference type="GenomeRNAi" id="40232"/>
<dbReference type="PRO" id="PR:P52304"/>
<dbReference type="Proteomes" id="UP000000803">
    <property type="component" value="Chromosome 3L"/>
</dbReference>
<dbReference type="Bgee" id="FBgn0003124">
    <property type="expression patterns" value="Expressed in egg cell and 50 other cell types or tissues"/>
</dbReference>
<dbReference type="ExpressionAtlas" id="P52304">
    <property type="expression patterns" value="baseline and differential"/>
</dbReference>
<dbReference type="GO" id="GO:0005814">
    <property type="term" value="C:centriole"/>
    <property type="evidence" value="ECO:0000314"/>
    <property type="project" value="FlyBase"/>
</dbReference>
<dbReference type="GO" id="GO:0005813">
    <property type="term" value="C:centrosome"/>
    <property type="evidence" value="ECO:0000314"/>
    <property type="project" value="FlyBase"/>
</dbReference>
<dbReference type="GO" id="GO:0005737">
    <property type="term" value="C:cytoplasm"/>
    <property type="evidence" value="ECO:0000314"/>
    <property type="project" value="FlyBase"/>
</dbReference>
<dbReference type="GO" id="GO:0005829">
    <property type="term" value="C:cytosol"/>
    <property type="evidence" value="ECO:0000314"/>
    <property type="project" value="FlyBase"/>
</dbReference>
<dbReference type="GO" id="GO:0000776">
    <property type="term" value="C:kinetochore"/>
    <property type="evidence" value="ECO:0000314"/>
    <property type="project" value="FlyBase"/>
</dbReference>
<dbReference type="GO" id="GO:0005828">
    <property type="term" value="C:kinetochore microtubule"/>
    <property type="evidence" value="ECO:0000314"/>
    <property type="project" value="FlyBase"/>
</dbReference>
<dbReference type="GO" id="GO:0005874">
    <property type="term" value="C:microtubule"/>
    <property type="evidence" value="ECO:0000314"/>
    <property type="project" value="FlyBase"/>
</dbReference>
<dbReference type="GO" id="GO:0030496">
    <property type="term" value="C:midbody"/>
    <property type="evidence" value="ECO:0000314"/>
    <property type="project" value="FlyBase"/>
</dbReference>
<dbReference type="GO" id="GO:1990023">
    <property type="term" value="C:mitotic spindle midzone"/>
    <property type="evidence" value="ECO:0000314"/>
    <property type="project" value="FlyBase"/>
</dbReference>
<dbReference type="GO" id="GO:0005635">
    <property type="term" value="C:nuclear envelope"/>
    <property type="evidence" value="ECO:0000314"/>
    <property type="project" value="FlyBase"/>
</dbReference>
<dbReference type="GO" id="GO:0005634">
    <property type="term" value="C:nucleus"/>
    <property type="evidence" value="ECO:0000314"/>
    <property type="project" value="FlyBase"/>
</dbReference>
<dbReference type="GO" id="GO:0000940">
    <property type="term" value="C:outer kinetochore"/>
    <property type="evidence" value="ECO:0000314"/>
    <property type="project" value="FlyBase"/>
</dbReference>
<dbReference type="GO" id="GO:0005819">
    <property type="term" value="C:spindle"/>
    <property type="evidence" value="ECO:0000314"/>
    <property type="project" value="FlyBase"/>
</dbReference>
<dbReference type="GO" id="GO:0000922">
    <property type="term" value="C:spindle pole"/>
    <property type="evidence" value="ECO:0000314"/>
    <property type="project" value="FlyBase"/>
</dbReference>
<dbReference type="GO" id="GO:0005524">
    <property type="term" value="F:ATP binding"/>
    <property type="evidence" value="ECO:0007669"/>
    <property type="project" value="UniProtKB-KW"/>
</dbReference>
<dbReference type="GO" id="GO:0004672">
    <property type="term" value="F:protein kinase activity"/>
    <property type="evidence" value="ECO:0000314"/>
    <property type="project" value="FlyBase"/>
</dbReference>
<dbReference type="GO" id="GO:0106310">
    <property type="term" value="F:protein serine kinase activity"/>
    <property type="evidence" value="ECO:0007669"/>
    <property type="project" value="RHEA"/>
</dbReference>
<dbReference type="GO" id="GO:0004674">
    <property type="term" value="F:protein serine/threonine kinase activity"/>
    <property type="evidence" value="ECO:0000314"/>
    <property type="project" value="FlyBase"/>
</dbReference>
<dbReference type="GO" id="GO:0000915">
    <property type="term" value="P:actomyosin contractile ring assembly"/>
    <property type="evidence" value="ECO:0000315"/>
    <property type="project" value="FlyBase"/>
</dbReference>
<dbReference type="GO" id="GO:0030954">
    <property type="term" value="P:astral microtubule nucleation"/>
    <property type="evidence" value="ECO:0000315"/>
    <property type="project" value="FlyBase"/>
</dbReference>
<dbReference type="GO" id="GO:0051315">
    <property type="term" value="P:attachment of mitotic spindle microtubules to kinetochore"/>
    <property type="evidence" value="ECO:0000314"/>
    <property type="project" value="CACAO"/>
</dbReference>
<dbReference type="GO" id="GO:0007098">
    <property type="term" value="P:centrosome cycle"/>
    <property type="evidence" value="ECO:0000315"/>
    <property type="project" value="FlyBase"/>
</dbReference>
<dbReference type="GO" id="GO:0035050">
    <property type="term" value="P:embryonic heart tube development"/>
    <property type="evidence" value="ECO:0000315"/>
    <property type="project" value="FlyBase"/>
</dbReference>
<dbReference type="GO" id="GO:0007147">
    <property type="term" value="P:female meiosis II"/>
    <property type="evidence" value="ECO:0000315"/>
    <property type="project" value="FlyBase"/>
</dbReference>
<dbReference type="GO" id="GO:0007143">
    <property type="term" value="P:female meiotic nuclear division"/>
    <property type="evidence" value="ECO:0000315"/>
    <property type="project" value="FlyBase"/>
</dbReference>
<dbReference type="GO" id="GO:0007526">
    <property type="term" value="P:larval somatic muscle development"/>
    <property type="evidence" value="ECO:0000315"/>
    <property type="project" value="FlyBase"/>
</dbReference>
<dbReference type="GO" id="GO:0030726">
    <property type="term" value="P:male germline ring canal formation"/>
    <property type="evidence" value="ECO:0000315"/>
    <property type="project" value="FlyBase"/>
</dbReference>
<dbReference type="GO" id="GO:0007112">
    <property type="term" value="P:male meiosis cytokinesis"/>
    <property type="evidence" value="ECO:0000315"/>
    <property type="project" value="FlyBase"/>
</dbReference>
<dbReference type="GO" id="GO:0007140">
    <property type="term" value="P:male meiotic nuclear division"/>
    <property type="evidence" value="ECO:0000315"/>
    <property type="project" value="FlyBase"/>
</dbReference>
<dbReference type="GO" id="GO:0051257">
    <property type="term" value="P:meiotic spindle midzone assembly"/>
    <property type="evidence" value="ECO:0000315"/>
    <property type="project" value="FlyBase"/>
</dbReference>
<dbReference type="GO" id="GO:0000278">
    <property type="term" value="P:mitotic cell cycle"/>
    <property type="evidence" value="ECO:0000315"/>
    <property type="project" value="FlyBase"/>
</dbReference>
<dbReference type="GO" id="GO:0007052">
    <property type="term" value="P:mitotic spindle organization"/>
    <property type="evidence" value="ECO:0000318"/>
    <property type="project" value="GO_Central"/>
</dbReference>
<dbReference type="GO" id="GO:0007406">
    <property type="term" value="P:negative regulation of neuroblast proliferation"/>
    <property type="evidence" value="ECO:0000315"/>
    <property type="project" value="FlyBase"/>
</dbReference>
<dbReference type="GO" id="GO:0048600">
    <property type="term" value="P:oocyte fate commitment"/>
    <property type="evidence" value="ECO:0000315"/>
    <property type="project" value="FlyBase"/>
</dbReference>
<dbReference type="GO" id="GO:0007344">
    <property type="term" value="P:pronuclear fusion"/>
    <property type="evidence" value="ECO:0000315"/>
    <property type="project" value="FlyBase"/>
</dbReference>
<dbReference type="GO" id="GO:0035046">
    <property type="term" value="P:pronuclear migration"/>
    <property type="evidence" value="ECO:0000315"/>
    <property type="project" value="FlyBase"/>
</dbReference>
<dbReference type="GO" id="GO:0008104">
    <property type="term" value="P:protein localization"/>
    <property type="evidence" value="ECO:0000315"/>
    <property type="project" value="FlyBase"/>
</dbReference>
<dbReference type="GO" id="GO:0035044">
    <property type="term" value="P:sperm aster formation"/>
    <property type="evidence" value="ECO:0000315"/>
    <property type="project" value="FlyBase"/>
</dbReference>
<dbReference type="GO" id="GO:0007058">
    <property type="term" value="P:spindle assembly involved in female meiosis II"/>
    <property type="evidence" value="ECO:0000315"/>
    <property type="project" value="FlyBase"/>
</dbReference>
<dbReference type="CDD" id="cd13118">
    <property type="entry name" value="POLO_box_1"/>
    <property type="match status" value="1"/>
</dbReference>
<dbReference type="CDD" id="cd13117">
    <property type="entry name" value="POLO_box_2"/>
    <property type="match status" value="1"/>
</dbReference>
<dbReference type="CDD" id="cd14099">
    <property type="entry name" value="STKc_PLK"/>
    <property type="match status" value="1"/>
</dbReference>
<dbReference type="FunFam" id="3.30.200.20:FF:000583">
    <property type="entry name" value="Polo"/>
    <property type="match status" value="1"/>
</dbReference>
<dbReference type="FunFam" id="1.10.510.10:FF:000311">
    <property type="entry name" value="Serine/threonine-protein kinase PLK"/>
    <property type="match status" value="1"/>
</dbReference>
<dbReference type="FunFam" id="3.30.1120.30:FF:000001">
    <property type="entry name" value="Serine/threonine-protein kinase PLK"/>
    <property type="match status" value="1"/>
</dbReference>
<dbReference type="Gene3D" id="3.30.200.20">
    <property type="entry name" value="Phosphorylase Kinase, domain 1"/>
    <property type="match status" value="1"/>
</dbReference>
<dbReference type="Gene3D" id="3.30.1120.30">
    <property type="entry name" value="POLO box domain"/>
    <property type="match status" value="2"/>
</dbReference>
<dbReference type="Gene3D" id="1.10.510.10">
    <property type="entry name" value="Transferase(Phosphotransferase) domain 1"/>
    <property type="match status" value="1"/>
</dbReference>
<dbReference type="InterPro" id="IPR011009">
    <property type="entry name" value="Kinase-like_dom_sf"/>
</dbReference>
<dbReference type="InterPro" id="IPR033701">
    <property type="entry name" value="POLO_box_1"/>
</dbReference>
<dbReference type="InterPro" id="IPR033695">
    <property type="entry name" value="POLO_box_2"/>
</dbReference>
<dbReference type="InterPro" id="IPR000959">
    <property type="entry name" value="POLO_box_dom"/>
</dbReference>
<dbReference type="InterPro" id="IPR036947">
    <property type="entry name" value="POLO_box_dom_sf"/>
</dbReference>
<dbReference type="InterPro" id="IPR000719">
    <property type="entry name" value="Prot_kinase_dom"/>
</dbReference>
<dbReference type="InterPro" id="IPR008271">
    <property type="entry name" value="Ser/Thr_kinase_AS"/>
</dbReference>
<dbReference type="PANTHER" id="PTHR24345">
    <property type="entry name" value="SERINE/THREONINE-PROTEIN KINASE PLK"/>
    <property type="match status" value="1"/>
</dbReference>
<dbReference type="PANTHER" id="PTHR24345:SF93">
    <property type="entry name" value="SERINE_THREONINE-PROTEIN KINASE PLK1"/>
    <property type="match status" value="1"/>
</dbReference>
<dbReference type="Pfam" id="PF00069">
    <property type="entry name" value="Pkinase"/>
    <property type="match status" value="1"/>
</dbReference>
<dbReference type="Pfam" id="PF00659">
    <property type="entry name" value="POLO_box"/>
    <property type="match status" value="2"/>
</dbReference>
<dbReference type="SMART" id="SM00220">
    <property type="entry name" value="S_TKc"/>
    <property type="match status" value="1"/>
</dbReference>
<dbReference type="SUPFAM" id="SSF82615">
    <property type="entry name" value="Polo-box domain"/>
    <property type="match status" value="2"/>
</dbReference>
<dbReference type="SUPFAM" id="SSF56112">
    <property type="entry name" value="Protein kinase-like (PK-like)"/>
    <property type="match status" value="1"/>
</dbReference>
<dbReference type="PROSITE" id="PS50078">
    <property type="entry name" value="POLO_BOX"/>
    <property type="match status" value="2"/>
</dbReference>
<dbReference type="PROSITE" id="PS50011">
    <property type="entry name" value="PROTEIN_KINASE_DOM"/>
    <property type="match status" value="1"/>
</dbReference>
<dbReference type="PROSITE" id="PS00108">
    <property type="entry name" value="PROTEIN_KINASE_ST"/>
    <property type="match status" value="1"/>
</dbReference>
<reference key="1">
    <citation type="journal article" date="1991" name="Genes Dev.">
        <title>Polo encodes a protein kinase homolog required for mitosis in Drosophila.</title>
        <authorList>
            <person name="Llamazares S."/>
            <person name="Moreira A."/>
            <person name="Tavares A."/>
            <person name="Girdham C."/>
            <person name="Spruce B.A."/>
            <person name="Gonzalez C."/>
            <person name="Karess R.E."/>
            <person name="Glover D.M."/>
            <person name="Sunkel C.E."/>
        </authorList>
    </citation>
    <scope>NUCLEOTIDE SEQUENCE [MRNA]</scope>
    <scope>FUNCTION</scope>
    <scope>SUBCELLULAR LOCATION</scope>
    <scope>TISSUE SPECIFICITY</scope>
    <source>
        <strain>Canton-S</strain>
        <strain>Oregon-R</strain>
        <tissue>Embryo</tissue>
    </source>
</reference>
<reference key="2">
    <citation type="journal article" date="2000" name="Science">
        <title>The genome sequence of Drosophila melanogaster.</title>
        <authorList>
            <person name="Adams M.D."/>
            <person name="Celniker S.E."/>
            <person name="Holt R.A."/>
            <person name="Evans C.A."/>
            <person name="Gocayne J.D."/>
            <person name="Amanatides P.G."/>
            <person name="Scherer S.E."/>
            <person name="Li P.W."/>
            <person name="Hoskins R.A."/>
            <person name="Galle R.F."/>
            <person name="George R.A."/>
            <person name="Lewis S.E."/>
            <person name="Richards S."/>
            <person name="Ashburner M."/>
            <person name="Henderson S.N."/>
            <person name="Sutton G.G."/>
            <person name="Wortman J.R."/>
            <person name="Yandell M.D."/>
            <person name="Zhang Q."/>
            <person name="Chen L.X."/>
            <person name="Brandon R.C."/>
            <person name="Rogers Y.-H.C."/>
            <person name="Blazej R.G."/>
            <person name="Champe M."/>
            <person name="Pfeiffer B.D."/>
            <person name="Wan K.H."/>
            <person name="Doyle C."/>
            <person name="Baxter E.G."/>
            <person name="Helt G."/>
            <person name="Nelson C.R."/>
            <person name="Miklos G.L.G."/>
            <person name="Abril J.F."/>
            <person name="Agbayani A."/>
            <person name="An H.-J."/>
            <person name="Andrews-Pfannkoch C."/>
            <person name="Baldwin D."/>
            <person name="Ballew R.M."/>
            <person name="Basu A."/>
            <person name="Baxendale J."/>
            <person name="Bayraktaroglu L."/>
            <person name="Beasley E.M."/>
            <person name="Beeson K.Y."/>
            <person name="Benos P.V."/>
            <person name="Berman B.P."/>
            <person name="Bhandari D."/>
            <person name="Bolshakov S."/>
            <person name="Borkova D."/>
            <person name="Botchan M.R."/>
            <person name="Bouck J."/>
            <person name="Brokstein P."/>
            <person name="Brottier P."/>
            <person name="Burtis K.C."/>
            <person name="Busam D.A."/>
            <person name="Butler H."/>
            <person name="Cadieu E."/>
            <person name="Center A."/>
            <person name="Chandra I."/>
            <person name="Cherry J.M."/>
            <person name="Cawley S."/>
            <person name="Dahlke C."/>
            <person name="Davenport L.B."/>
            <person name="Davies P."/>
            <person name="de Pablos B."/>
            <person name="Delcher A."/>
            <person name="Deng Z."/>
            <person name="Mays A.D."/>
            <person name="Dew I."/>
            <person name="Dietz S.M."/>
            <person name="Dodson K."/>
            <person name="Doup L.E."/>
            <person name="Downes M."/>
            <person name="Dugan-Rocha S."/>
            <person name="Dunkov B.C."/>
            <person name="Dunn P."/>
            <person name="Durbin K.J."/>
            <person name="Evangelista C.C."/>
            <person name="Ferraz C."/>
            <person name="Ferriera S."/>
            <person name="Fleischmann W."/>
            <person name="Fosler C."/>
            <person name="Gabrielian A.E."/>
            <person name="Garg N.S."/>
            <person name="Gelbart W.M."/>
            <person name="Glasser K."/>
            <person name="Glodek A."/>
            <person name="Gong F."/>
            <person name="Gorrell J.H."/>
            <person name="Gu Z."/>
            <person name="Guan P."/>
            <person name="Harris M."/>
            <person name="Harris N.L."/>
            <person name="Harvey D.A."/>
            <person name="Heiman T.J."/>
            <person name="Hernandez J.R."/>
            <person name="Houck J."/>
            <person name="Hostin D."/>
            <person name="Houston K.A."/>
            <person name="Howland T.J."/>
            <person name="Wei M.-H."/>
            <person name="Ibegwam C."/>
            <person name="Jalali M."/>
            <person name="Kalush F."/>
            <person name="Karpen G.H."/>
            <person name="Ke Z."/>
            <person name="Kennison J.A."/>
            <person name="Ketchum K.A."/>
            <person name="Kimmel B.E."/>
            <person name="Kodira C.D."/>
            <person name="Kraft C.L."/>
            <person name="Kravitz S."/>
            <person name="Kulp D."/>
            <person name="Lai Z."/>
            <person name="Lasko P."/>
            <person name="Lei Y."/>
            <person name="Levitsky A.A."/>
            <person name="Li J.H."/>
            <person name="Li Z."/>
            <person name="Liang Y."/>
            <person name="Lin X."/>
            <person name="Liu X."/>
            <person name="Mattei B."/>
            <person name="McIntosh T.C."/>
            <person name="McLeod M.P."/>
            <person name="McPherson D."/>
            <person name="Merkulov G."/>
            <person name="Milshina N.V."/>
            <person name="Mobarry C."/>
            <person name="Morris J."/>
            <person name="Moshrefi A."/>
            <person name="Mount S.M."/>
            <person name="Moy M."/>
            <person name="Murphy B."/>
            <person name="Murphy L."/>
            <person name="Muzny D.M."/>
            <person name="Nelson D.L."/>
            <person name="Nelson D.R."/>
            <person name="Nelson K.A."/>
            <person name="Nixon K."/>
            <person name="Nusskern D.R."/>
            <person name="Pacleb J.M."/>
            <person name="Palazzolo M."/>
            <person name="Pittman G.S."/>
            <person name="Pan S."/>
            <person name="Pollard J."/>
            <person name="Puri V."/>
            <person name="Reese M.G."/>
            <person name="Reinert K."/>
            <person name="Remington K."/>
            <person name="Saunders R.D.C."/>
            <person name="Scheeler F."/>
            <person name="Shen H."/>
            <person name="Shue B.C."/>
            <person name="Siden-Kiamos I."/>
            <person name="Simpson M."/>
            <person name="Skupski M.P."/>
            <person name="Smith T.J."/>
            <person name="Spier E."/>
            <person name="Spradling A.C."/>
            <person name="Stapleton M."/>
            <person name="Strong R."/>
            <person name="Sun E."/>
            <person name="Svirskas R."/>
            <person name="Tector C."/>
            <person name="Turner R."/>
            <person name="Venter E."/>
            <person name="Wang A.H."/>
            <person name="Wang X."/>
            <person name="Wang Z.-Y."/>
            <person name="Wassarman D.A."/>
            <person name="Weinstock G.M."/>
            <person name="Weissenbach J."/>
            <person name="Williams S.M."/>
            <person name="Woodage T."/>
            <person name="Worley K.C."/>
            <person name="Wu D."/>
            <person name="Yang S."/>
            <person name="Yao Q.A."/>
            <person name="Ye J."/>
            <person name="Yeh R.-F."/>
            <person name="Zaveri J.S."/>
            <person name="Zhan M."/>
            <person name="Zhang G."/>
            <person name="Zhao Q."/>
            <person name="Zheng L."/>
            <person name="Zheng X.H."/>
            <person name="Zhong F.N."/>
            <person name="Zhong W."/>
            <person name="Zhou X."/>
            <person name="Zhu S.C."/>
            <person name="Zhu X."/>
            <person name="Smith H.O."/>
            <person name="Gibbs R.A."/>
            <person name="Myers E.W."/>
            <person name="Rubin G.M."/>
            <person name="Venter J.C."/>
        </authorList>
    </citation>
    <scope>NUCLEOTIDE SEQUENCE [LARGE SCALE GENOMIC DNA]</scope>
    <source>
        <strain>Berkeley</strain>
    </source>
</reference>
<reference key="3">
    <citation type="journal article" date="2002" name="Genome Biol.">
        <title>Annotation of the Drosophila melanogaster euchromatic genome: a systematic review.</title>
        <authorList>
            <person name="Misra S."/>
            <person name="Crosby M.A."/>
            <person name="Mungall C.J."/>
            <person name="Matthews B.B."/>
            <person name="Campbell K.S."/>
            <person name="Hradecky P."/>
            <person name="Huang Y."/>
            <person name="Kaminker J.S."/>
            <person name="Millburn G.H."/>
            <person name="Prochnik S.E."/>
            <person name="Smith C.D."/>
            <person name="Tupy J.L."/>
            <person name="Whitfield E.J."/>
            <person name="Bayraktaroglu L."/>
            <person name="Berman B.P."/>
            <person name="Bettencourt B.R."/>
            <person name="Celniker S.E."/>
            <person name="de Grey A.D.N.J."/>
            <person name="Drysdale R.A."/>
            <person name="Harris N.L."/>
            <person name="Richter J."/>
            <person name="Russo S."/>
            <person name="Schroeder A.J."/>
            <person name="Shu S.Q."/>
            <person name="Stapleton M."/>
            <person name="Yamada C."/>
            <person name="Ashburner M."/>
            <person name="Gelbart W.M."/>
            <person name="Rubin G.M."/>
            <person name="Lewis S.E."/>
        </authorList>
    </citation>
    <scope>GENOME REANNOTATION</scope>
    <source>
        <strain>Berkeley</strain>
    </source>
</reference>
<reference key="4">
    <citation type="journal article" date="2002" name="Genome Biol.">
        <title>A Drosophila full-length cDNA resource.</title>
        <authorList>
            <person name="Stapleton M."/>
            <person name="Carlson J.W."/>
            <person name="Brokstein P."/>
            <person name="Yu C."/>
            <person name="Champe M."/>
            <person name="George R.A."/>
            <person name="Guarin H."/>
            <person name="Kronmiller B."/>
            <person name="Pacleb J.M."/>
            <person name="Park S."/>
            <person name="Wan K.H."/>
            <person name="Rubin G.M."/>
            <person name="Celniker S.E."/>
        </authorList>
    </citation>
    <scope>NUCLEOTIDE SEQUENCE [LARGE SCALE MRNA]</scope>
    <source>
        <strain>Berkeley</strain>
        <tissue>Embryo</tissue>
    </source>
</reference>
<reference key="5">
    <citation type="journal article" date="2008" name="J. Proteome Res.">
        <title>Phosphoproteome analysis of Drosophila melanogaster embryos.</title>
        <authorList>
            <person name="Zhai B."/>
            <person name="Villen J."/>
            <person name="Beausoleil S.A."/>
            <person name="Mintseris J."/>
            <person name="Gygi S.P."/>
        </authorList>
    </citation>
    <scope>PHOSPHORYLATION [LARGE SCALE ANALYSIS] AT THR-182; THR-186; SER-299; THR-302; SER-306; THR-323; SER-327 AND THR-328</scope>
    <scope>IDENTIFICATION BY MASS SPECTROMETRY</scope>
    <source>
        <tissue>Embryo</tissue>
    </source>
</reference>
<reference key="6">
    <citation type="journal article" date="2014" name="Open Biol.">
        <title>Differing requirements for Augmin in male meiotic and mitotic spindle formation in Drosophila.</title>
        <authorList>
            <person name="Savoian M.S."/>
            <person name="Glover D.M."/>
        </authorList>
    </citation>
    <scope>FUNCTION</scope>
</reference>
<organism>
    <name type="scientific">Drosophila melanogaster</name>
    <name type="common">Fruit fly</name>
    <dbReference type="NCBI Taxonomy" id="7227"/>
    <lineage>
        <taxon>Eukaryota</taxon>
        <taxon>Metazoa</taxon>
        <taxon>Ecdysozoa</taxon>
        <taxon>Arthropoda</taxon>
        <taxon>Hexapoda</taxon>
        <taxon>Insecta</taxon>
        <taxon>Pterygota</taxon>
        <taxon>Neoptera</taxon>
        <taxon>Endopterygota</taxon>
        <taxon>Diptera</taxon>
        <taxon>Brachycera</taxon>
        <taxon>Muscomorpha</taxon>
        <taxon>Ephydroidea</taxon>
        <taxon>Drosophilidae</taxon>
        <taxon>Drosophila</taxon>
        <taxon>Sophophora</taxon>
    </lineage>
</organism>
<accession>P52304</accession>
<accession>A4V258</accession>
<accession>Q9VWB2</accession>
<feature type="chain" id="PRO_0000086578" description="Serine/threonine-protein kinase polo">
    <location>
        <begin position="1"/>
        <end position="576"/>
    </location>
</feature>
<feature type="domain" description="Protein kinase" evidence="2">
    <location>
        <begin position="25"/>
        <end position="277"/>
    </location>
</feature>
<feature type="domain" description="POLO box 1" evidence="1">
    <location>
        <begin position="391"/>
        <end position="469"/>
    </location>
</feature>
<feature type="domain" description="POLO box 2" evidence="1">
    <location>
        <begin position="491"/>
        <end position="572"/>
    </location>
</feature>
<feature type="active site" description="Proton acceptor" evidence="2 3">
    <location>
        <position position="148"/>
    </location>
</feature>
<feature type="binding site" evidence="2">
    <location>
        <begin position="31"/>
        <end position="39"/>
    </location>
    <ligand>
        <name>ATP</name>
        <dbReference type="ChEBI" id="CHEBI:30616"/>
    </ligand>
</feature>
<feature type="binding site" evidence="2">
    <location>
        <position position="54"/>
    </location>
    <ligand>
        <name>ATP</name>
        <dbReference type="ChEBI" id="CHEBI:30616"/>
    </ligand>
</feature>
<feature type="modified residue" description="Phosphothreonine" evidence="5">
    <location>
        <position position="182"/>
    </location>
</feature>
<feature type="modified residue" description="Phosphothreonine" evidence="5">
    <location>
        <position position="186"/>
    </location>
</feature>
<feature type="modified residue" description="Phosphoserine" evidence="5">
    <location>
        <position position="299"/>
    </location>
</feature>
<feature type="modified residue" description="Phosphothreonine" evidence="5">
    <location>
        <position position="302"/>
    </location>
</feature>
<feature type="modified residue" description="Phosphoserine" evidence="5">
    <location>
        <position position="306"/>
    </location>
</feature>
<feature type="modified residue" description="Phosphothreonine" evidence="5">
    <location>
        <position position="323"/>
    </location>
</feature>
<feature type="modified residue" description="Phosphoserine" evidence="5">
    <location>
        <position position="327"/>
    </location>
</feature>
<feature type="modified residue" description="Phosphothreonine" evidence="5">
    <location>
        <position position="328"/>
    </location>
</feature>
<feature type="sequence conflict" description="In Ref. 1; CAA44963." evidence="7" ref="1">
    <original>P</original>
    <variation>A</variation>
    <location>
        <position position="187"/>
    </location>
</feature>
<gene>
    <name type="primary">polo</name>
    <name type="ORF">CG12306</name>
</gene>
<proteinExistence type="evidence at protein level"/>
<protein>
    <recommendedName>
        <fullName>Serine/threonine-protein kinase polo</fullName>
        <ecNumber>2.7.11.21</ecNumber>
    </recommendedName>
</protein>